<gene>
    <name evidence="1" type="primary">rpoC</name>
    <name type="ordered locus">DR_0911</name>
</gene>
<keyword id="KW-0240">DNA-directed RNA polymerase</keyword>
<keyword id="KW-0460">Magnesium</keyword>
<keyword id="KW-0479">Metal-binding</keyword>
<keyword id="KW-0548">Nucleotidyltransferase</keyword>
<keyword id="KW-1185">Reference proteome</keyword>
<keyword id="KW-0804">Transcription</keyword>
<keyword id="KW-0808">Transferase</keyword>
<keyword id="KW-0862">Zinc</keyword>
<name>RPOC_DEIRA</name>
<comment type="function">
    <text evidence="1">DNA-dependent RNA polymerase catalyzes the transcription of DNA into RNA using the four ribonucleoside triphosphates as substrates.</text>
</comment>
<comment type="catalytic activity">
    <reaction evidence="1">
        <text>RNA(n) + a ribonucleoside 5'-triphosphate = RNA(n+1) + diphosphate</text>
        <dbReference type="Rhea" id="RHEA:21248"/>
        <dbReference type="Rhea" id="RHEA-COMP:14527"/>
        <dbReference type="Rhea" id="RHEA-COMP:17342"/>
        <dbReference type="ChEBI" id="CHEBI:33019"/>
        <dbReference type="ChEBI" id="CHEBI:61557"/>
        <dbReference type="ChEBI" id="CHEBI:140395"/>
        <dbReference type="EC" id="2.7.7.6"/>
    </reaction>
</comment>
<comment type="cofactor">
    <cofactor evidence="1">
        <name>Mg(2+)</name>
        <dbReference type="ChEBI" id="CHEBI:18420"/>
    </cofactor>
    <text evidence="1">Binds 1 Mg(2+) ion per subunit.</text>
</comment>
<comment type="cofactor">
    <cofactor evidence="1">
        <name>Zn(2+)</name>
        <dbReference type="ChEBI" id="CHEBI:29105"/>
    </cofactor>
    <text evidence="1">Binds 2 Zn(2+) ions per subunit.</text>
</comment>
<comment type="subunit">
    <text evidence="1">The RNAP catalytic core consists of 2 alpha, 1 beta, 1 beta' and 1 omega subunit. When a sigma factor is associated with the core the holoenzyme is formed, which can initiate transcription.</text>
</comment>
<comment type="similarity">
    <text evidence="1">Belongs to the RNA polymerase beta' chain family.</text>
</comment>
<sequence length="1546" mass="171361">MKDFNKVRIAIASPEKIREWSFGEVEKPETINYRTLKPEREGLFDERIFGPIKDYECACGKYKRQRYEGKVCERCGVEVTSSKVRRYRMGHIDLATPAAHIWYVKDSPSKIGTLLDLSAGQLEKVLYFSSFIVTKPFNAQKDGRPLKRGELLSDDEYRELRFGRQETYTIPNSVEDVEIRDGEYVTRGQILGGNVVSKMDGLAQYRFPRRAVIAYSEGVEASLPLPADTLVEQETFRAGEILAELEQDVQITAPVAGTVFMHDLGEDSVMIELREGVEANDSDEEEAADPIRGEVLARVYVPHGMNVQVAEGEVIEAGALLADASEGARLRVSRDSNLSGVTFPKKKGDVTVTAHWTRRVEYPIDPTMHVLVGDGSEVTKGQRVIGAIDKEEEVIAEADGVITLHQPASILVSKAKVYAYDDEPLVVNGDRVEPGDELADDGNLRSEISGRIELDLVRKQVRVIESYDFEAKMGAEAVKELLDELNLDELETELNEQMKDNSRHKRAKARKRLEVTRSFKASGNNPSWMILGTVPVMPPDLRPMVQVDGGRFATSDLNDLYRRLINRNNRLKKLMSQGAPDMIIRNEKRMLQEAVDALIDNGRRGSPVTNPGSDRSLRSLTDLLGGKQGRFRQNLLGKRVDYSGRSVIVVGPQLKLHQCGVPKRMALELFKPFLFKVLEEKGEVTNIKQARKMLERYRDTRDSVWDALEEVIEDKVVLLNRAPTLHRLGIQAFEPVLVEGQSIQLHPLVCEAFNADFDGDQMAIHVPLSAQAQAEARIQMLASHNLLSPANGEPNVKPSRDIILGIFTLTQLRRDNLGAGTEYASEADALAAFDEGKLSLNSPVMVNGVETSPGRLRYTFSNPDEALHAVEQGEIDHQDHVRIRLNGQVYETSAGRVQFRRMVQEALGAQGGLIDTLVDLETTYEKDALKDMVMACFKHLGIEATAGLLDGLKEGGFKLSTTSGITIGIDDIVLPPNKGELLAEADQMLAEIEQNFEFGFMTEEERYKQVVQLWNNTTDAVKDAVFENFSKNYPFNPLWIMSQSGARGNPQQIRQLAGMRGLMARPDGSTIEVPIRASFREGLTVLEYFISTHGARKGGADTALRTADSGYLTRKLVDVAHEVVVRDVDCGSTDSTVMPLGATDERTGEWRSRKGSEIETSIYGRTLTADVEFSDGRVIPEGEMLSMEDVKAIAKDAKHIGEVFVRTPLNCRVKAGVCQKCYGYDLSQAKPVSMGEAVGVVAAESIGEPGTQLTMRTFHTGGIAGGGDITMGLPRVIELFEARKPKTQAVVADRDGVIRIEEEEERYLVRIEADDEQYSSKTATKVPRVLRMTVKDGERVEAGQPITRGAVNPHDLLMYKDTDAAQRYLVEEVQRVYRSQGVKVHDKHIEVIVRQMLRWVEVTDGGDTTLLEGQTVEHWEVDQANEALAEGQTPASWKPVLLGITKSSLTTKSWLSAASFQHTTHVLTEASMRGQVDDLIGLKENVILGKLIPAGTGLLTVREMQVADDRTLEKYGEGSTSSDAVTGGQRYDDTRPGSSINPGYGD</sequence>
<dbReference type="EC" id="2.7.7.6" evidence="1"/>
<dbReference type="EMBL" id="AE000513">
    <property type="protein sequence ID" value="AAF10485.1"/>
    <property type="molecule type" value="Genomic_DNA"/>
</dbReference>
<dbReference type="PIR" id="F75461">
    <property type="entry name" value="F75461"/>
</dbReference>
<dbReference type="RefSeq" id="NP_294635.1">
    <property type="nucleotide sequence ID" value="NC_001263.1"/>
</dbReference>
<dbReference type="RefSeq" id="WP_010887556.1">
    <property type="nucleotide sequence ID" value="NC_001263.1"/>
</dbReference>
<dbReference type="SMR" id="Q9RVW0"/>
<dbReference type="FunCoup" id="Q9RVW0">
    <property type="interactions" value="397"/>
</dbReference>
<dbReference type="STRING" id="243230.DR_0911"/>
<dbReference type="PaxDb" id="243230-DR_0911"/>
<dbReference type="EnsemblBacteria" id="AAF10485">
    <property type="protein sequence ID" value="AAF10485"/>
    <property type="gene ID" value="DR_0911"/>
</dbReference>
<dbReference type="GeneID" id="69517156"/>
<dbReference type="KEGG" id="dra:DR_0911"/>
<dbReference type="PATRIC" id="fig|243230.17.peg.1098"/>
<dbReference type="eggNOG" id="COG0086">
    <property type="taxonomic scope" value="Bacteria"/>
</dbReference>
<dbReference type="HOGENOM" id="CLU_000524_3_1_0"/>
<dbReference type="InParanoid" id="Q9RVW0"/>
<dbReference type="OrthoDB" id="9815296at2"/>
<dbReference type="Proteomes" id="UP000002524">
    <property type="component" value="Chromosome 1"/>
</dbReference>
<dbReference type="GO" id="GO:0000428">
    <property type="term" value="C:DNA-directed RNA polymerase complex"/>
    <property type="evidence" value="ECO:0007669"/>
    <property type="project" value="UniProtKB-KW"/>
</dbReference>
<dbReference type="GO" id="GO:0003677">
    <property type="term" value="F:DNA binding"/>
    <property type="evidence" value="ECO:0007669"/>
    <property type="project" value="UniProtKB-UniRule"/>
</dbReference>
<dbReference type="GO" id="GO:0003899">
    <property type="term" value="F:DNA-directed RNA polymerase activity"/>
    <property type="evidence" value="ECO:0007669"/>
    <property type="project" value="UniProtKB-UniRule"/>
</dbReference>
<dbReference type="GO" id="GO:0000287">
    <property type="term" value="F:magnesium ion binding"/>
    <property type="evidence" value="ECO:0007669"/>
    <property type="project" value="UniProtKB-UniRule"/>
</dbReference>
<dbReference type="GO" id="GO:0008270">
    <property type="term" value="F:zinc ion binding"/>
    <property type="evidence" value="ECO:0007669"/>
    <property type="project" value="UniProtKB-UniRule"/>
</dbReference>
<dbReference type="GO" id="GO:0006351">
    <property type="term" value="P:DNA-templated transcription"/>
    <property type="evidence" value="ECO:0007669"/>
    <property type="project" value="UniProtKB-UniRule"/>
</dbReference>
<dbReference type="CDD" id="cd02655">
    <property type="entry name" value="RNAP_beta'_C"/>
    <property type="match status" value="1"/>
</dbReference>
<dbReference type="CDD" id="cd01609">
    <property type="entry name" value="RNAP_beta'_N"/>
    <property type="match status" value="1"/>
</dbReference>
<dbReference type="Gene3D" id="1.10.132.30">
    <property type="match status" value="1"/>
</dbReference>
<dbReference type="Gene3D" id="1.10.150.390">
    <property type="match status" value="1"/>
</dbReference>
<dbReference type="Gene3D" id="1.10.1790.20">
    <property type="match status" value="1"/>
</dbReference>
<dbReference type="Gene3D" id="1.10.40.90">
    <property type="match status" value="1"/>
</dbReference>
<dbReference type="Gene3D" id="2.40.40.20">
    <property type="match status" value="1"/>
</dbReference>
<dbReference type="Gene3D" id="2.40.50.100">
    <property type="match status" value="5"/>
</dbReference>
<dbReference type="Gene3D" id="3.90.105.10">
    <property type="entry name" value="Molybdopterin biosynthesis moea protein, domain 2"/>
    <property type="match status" value="1"/>
</dbReference>
<dbReference type="Gene3D" id="4.10.860.120">
    <property type="entry name" value="RNA polymerase II, clamp domain"/>
    <property type="match status" value="1"/>
</dbReference>
<dbReference type="Gene3D" id="1.10.274.100">
    <property type="entry name" value="RNA polymerase Rpb1, domain 3"/>
    <property type="match status" value="1"/>
</dbReference>
<dbReference type="HAMAP" id="MF_01322">
    <property type="entry name" value="RNApol_bact_RpoC"/>
    <property type="match status" value="1"/>
</dbReference>
<dbReference type="InterPro" id="IPR045867">
    <property type="entry name" value="DNA-dir_RpoC_beta_prime"/>
</dbReference>
<dbReference type="InterPro" id="IPR012754">
    <property type="entry name" value="DNA-dir_RpoC_beta_prime_bact"/>
</dbReference>
<dbReference type="InterPro" id="IPR000722">
    <property type="entry name" value="RNA_pol_asu"/>
</dbReference>
<dbReference type="InterPro" id="IPR006592">
    <property type="entry name" value="RNA_pol_N"/>
</dbReference>
<dbReference type="InterPro" id="IPR007080">
    <property type="entry name" value="RNA_pol_Rpb1_1"/>
</dbReference>
<dbReference type="InterPro" id="IPR007066">
    <property type="entry name" value="RNA_pol_Rpb1_3"/>
</dbReference>
<dbReference type="InterPro" id="IPR042102">
    <property type="entry name" value="RNA_pol_Rpb1_3_sf"/>
</dbReference>
<dbReference type="InterPro" id="IPR007083">
    <property type="entry name" value="RNA_pol_Rpb1_4"/>
</dbReference>
<dbReference type="InterPro" id="IPR007081">
    <property type="entry name" value="RNA_pol_Rpb1_5"/>
</dbReference>
<dbReference type="InterPro" id="IPR044893">
    <property type="entry name" value="RNA_pol_Rpb1_clamp_domain"/>
</dbReference>
<dbReference type="InterPro" id="IPR038120">
    <property type="entry name" value="Rpb1_funnel_sf"/>
</dbReference>
<dbReference type="InterPro" id="IPR048566">
    <property type="entry name" value="RpoC_hybrid"/>
</dbReference>
<dbReference type="NCBIfam" id="TIGR02386">
    <property type="entry name" value="rpoC_TIGR"/>
    <property type="match status" value="1"/>
</dbReference>
<dbReference type="PANTHER" id="PTHR19376">
    <property type="entry name" value="DNA-DIRECTED RNA POLYMERASE"/>
    <property type="match status" value="1"/>
</dbReference>
<dbReference type="PANTHER" id="PTHR19376:SF54">
    <property type="entry name" value="DNA-DIRECTED RNA POLYMERASE SUBUNIT BETA"/>
    <property type="match status" value="1"/>
</dbReference>
<dbReference type="Pfam" id="PF04997">
    <property type="entry name" value="RNA_pol_Rpb1_1"/>
    <property type="match status" value="2"/>
</dbReference>
<dbReference type="Pfam" id="PF00623">
    <property type="entry name" value="RNA_pol_Rpb1_2"/>
    <property type="match status" value="1"/>
</dbReference>
<dbReference type="Pfam" id="PF04983">
    <property type="entry name" value="RNA_pol_Rpb1_3"/>
    <property type="match status" value="1"/>
</dbReference>
<dbReference type="Pfam" id="PF05000">
    <property type="entry name" value="RNA_pol_Rpb1_4"/>
    <property type="match status" value="1"/>
</dbReference>
<dbReference type="Pfam" id="PF04998">
    <property type="entry name" value="RNA_pol_Rpb1_5"/>
    <property type="match status" value="1"/>
</dbReference>
<dbReference type="Pfam" id="PF21668">
    <property type="entry name" value="RPOC_hybrid"/>
    <property type="match status" value="1"/>
</dbReference>
<dbReference type="SMART" id="SM00663">
    <property type="entry name" value="RPOLA_N"/>
    <property type="match status" value="1"/>
</dbReference>
<dbReference type="SUPFAM" id="SSF64484">
    <property type="entry name" value="beta and beta-prime subunits of DNA dependent RNA-polymerase"/>
    <property type="match status" value="1"/>
</dbReference>
<organism>
    <name type="scientific">Deinococcus radiodurans (strain ATCC 13939 / DSM 20539 / JCM 16871 / CCUG 27074 / LMG 4051 / NBRC 15346 / NCIMB 9279 / VKM B-1422 / R1)</name>
    <dbReference type="NCBI Taxonomy" id="243230"/>
    <lineage>
        <taxon>Bacteria</taxon>
        <taxon>Thermotogati</taxon>
        <taxon>Deinococcota</taxon>
        <taxon>Deinococci</taxon>
        <taxon>Deinococcales</taxon>
        <taxon>Deinococcaceae</taxon>
        <taxon>Deinococcus</taxon>
    </lineage>
</organism>
<accession>Q9RVW0</accession>
<evidence type="ECO:0000255" key="1">
    <source>
        <dbReference type="HAMAP-Rule" id="MF_01322"/>
    </source>
</evidence>
<evidence type="ECO:0000256" key="2">
    <source>
        <dbReference type="SAM" id="MobiDB-lite"/>
    </source>
</evidence>
<proteinExistence type="inferred from homology"/>
<feature type="chain" id="PRO_0000067739" description="DNA-directed RNA polymerase subunit beta'">
    <location>
        <begin position="1"/>
        <end position="1546"/>
    </location>
</feature>
<feature type="region of interest" description="Disordered" evidence="2">
    <location>
        <begin position="1512"/>
        <end position="1546"/>
    </location>
</feature>
<feature type="compositionally biased region" description="Polar residues" evidence="2">
    <location>
        <begin position="1536"/>
        <end position="1546"/>
    </location>
</feature>
<feature type="binding site" evidence="1">
    <location>
        <position position="57"/>
    </location>
    <ligand>
        <name>Zn(2+)</name>
        <dbReference type="ChEBI" id="CHEBI:29105"/>
        <label>1</label>
    </ligand>
</feature>
<feature type="binding site" evidence="1">
    <location>
        <position position="59"/>
    </location>
    <ligand>
        <name>Zn(2+)</name>
        <dbReference type="ChEBI" id="CHEBI:29105"/>
        <label>1</label>
    </ligand>
</feature>
<feature type="binding site" evidence="1">
    <location>
        <position position="72"/>
    </location>
    <ligand>
        <name>Zn(2+)</name>
        <dbReference type="ChEBI" id="CHEBI:29105"/>
        <label>1</label>
    </ligand>
</feature>
<feature type="binding site" evidence="1">
    <location>
        <position position="75"/>
    </location>
    <ligand>
        <name>Zn(2+)</name>
        <dbReference type="ChEBI" id="CHEBI:29105"/>
        <label>1</label>
    </ligand>
</feature>
<feature type="binding site" evidence="1">
    <location>
        <position position="756"/>
    </location>
    <ligand>
        <name>Mg(2+)</name>
        <dbReference type="ChEBI" id="CHEBI:18420"/>
    </ligand>
</feature>
<feature type="binding site" evidence="1">
    <location>
        <position position="758"/>
    </location>
    <ligand>
        <name>Mg(2+)</name>
        <dbReference type="ChEBI" id="CHEBI:18420"/>
    </ligand>
</feature>
<feature type="binding site" evidence="1">
    <location>
        <position position="760"/>
    </location>
    <ligand>
        <name>Mg(2+)</name>
        <dbReference type="ChEBI" id="CHEBI:18420"/>
    </ligand>
</feature>
<feature type="binding site" evidence="1">
    <location>
        <position position="1130"/>
    </location>
    <ligand>
        <name>Zn(2+)</name>
        <dbReference type="ChEBI" id="CHEBI:29105"/>
        <label>2</label>
    </ligand>
</feature>
<feature type="binding site" evidence="1">
    <location>
        <position position="1211"/>
    </location>
    <ligand>
        <name>Zn(2+)</name>
        <dbReference type="ChEBI" id="CHEBI:29105"/>
        <label>2</label>
    </ligand>
</feature>
<feature type="binding site" evidence="1">
    <location>
        <position position="1218"/>
    </location>
    <ligand>
        <name>Zn(2+)</name>
        <dbReference type="ChEBI" id="CHEBI:29105"/>
        <label>2</label>
    </ligand>
</feature>
<feature type="binding site" evidence="1">
    <location>
        <position position="1221"/>
    </location>
    <ligand>
        <name>Zn(2+)</name>
        <dbReference type="ChEBI" id="CHEBI:29105"/>
        <label>2</label>
    </ligand>
</feature>
<reference key="1">
    <citation type="journal article" date="1999" name="Science">
        <title>Genome sequence of the radioresistant bacterium Deinococcus radiodurans R1.</title>
        <authorList>
            <person name="White O."/>
            <person name="Eisen J.A."/>
            <person name="Heidelberg J.F."/>
            <person name="Hickey E.K."/>
            <person name="Peterson J.D."/>
            <person name="Dodson R.J."/>
            <person name="Haft D.H."/>
            <person name="Gwinn M.L."/>
            <person name="Nelson W.C."/>
            <person name="Richardson D.L."/>
            <person name="Moffat K.S."/>
            <person name="Qin H."/>
            <person name="Jiang L."/>
            <person name="Pamphile W."/>
            <person name="Crosby M."/>
            <person name="Shen M."/>
            <person name="Vamathevan J.J."/>
            <person name="Lam P."/>
            <person name="McDonald L.A."/>
            <person name="Utterback T.R."/>
            <person name="Zalewski C."/>
            <person name="Makarova K.S."/>
            <person name="Aravind L."/>
            <person name="Daly M.J."/>
            <person name="Minton K.W."/>
            <person name="Fleischmann R.D."/>
            <person name="Ketchum K.A."/>
            <person name="Nelson K.E."/>
            <person name="Salzberg S.L."/>
            <person name="Smith H.O."/>
            <person name="Venter J.C."/>
            <person name="Fraser C.M."/>
        </authorList>
    </citation>
    <scope>NUCLEOTIDE SEQUENCE [LARGE SCALE GENOMIC DNA]</scope>
    <source>
        <strain>ATCC 13939 / DSM 20539 / JCM 16871 / CCUG 27074 / LMG 4051 / NBRC 15346 / NCIMB 9279 / VKM B-1422 / R1</strain>
    </source>
</reference>
<protein>
    <recommendedName>
        <fullName evidence="1">DNA-directed RNA polymerase subunit beta'</fullName>
        <shortName evidence="1">RNAP subunit beta'</shortName>
        <ecNumber evidence="1">2.7.7.6</ecNumber>
    </recommendedName>
    <alternativeName>
        <fullName evidence="1">RNA polymerase subunit beta'</fullName>
    </alternativeName>
    <alternativeName>
        <fullName evidence="1">Transcriptase subunit beta'</fullName>
    </alternativeName>
</protein>